<accession>P50230</accession>
<accession>A1EC89</accession>
<proteinExistence type="inferred from homology"/>
<dbReference type="EMBL" id="U06434">
    <property type="protein sequence ID" value="AAA96497.1"/>
    <property type="molecule type" value="mRNA"/>
</dbReference>
<dbReference type="EMBL" id="EF121996">
    <property type="protein sequence ID" value="ABL63435.1"/>
    <property type="molecule type" value="mRNA"/>
</dbReference>
<dbReference type="EMBL" id="EF121997">
    <property type="protein sequence ID" value="ABL63436.1"/>
    <property type="molecule type" value="mRNA"/>
</dbReference>
<dbReference type="RefSeq" id="NP_446310.1">
    <property type="nucleotide sequence ID" value="NM_053858.1"/>
</dbReference>
<dbReference type="SMR" id="P50230"/>
<dbReference type="FunCoup" id="P50230">
    <property type="interactions" value="291"/>
</dbReference>
<dbReference type="STRING" id="10116.ENSRNOP00000015199"/>
<dbReference type="BindingDB" id="P50230"/>
<dbReference type="PaxDb" id="10116-ENSRNOP00000015199"/>
<dbReference type="GeneID" id="116637"/>
<dbReference type="KEGG" id="rno:116637"/>
<dbReference type="AGR" id="RGD:620441"/>
<dbReference type="CTD" id="6351"/>
<dbReference type="RGD" id="620441">
    <property type="gene designation" value="Ccl4"/>
</dbReference>
<dbReference type="eggNOG" id="ENOG502S8M4">
    <property type="taxonomic scope" value="Eukaryota"/>
</dbReference>
<dbReference type="InParanoid" id="P50230"/>
<dbReference type="PhylomeDB" id="P50230"/>
<dbReference type="Reactome" id="R-RNO-380108">
    <property type="pathway name" value="Chemokine receptors bind chemokines"/>
</dbReference>
<dbReference type="Reactome" id="R-RNO-418594">
    <property type="pathway name" value="G alpha (i) signalling events"/>
</dbReference>
<dbReference type="PRO" id="PR:P50230"/>
<dbReference type="Proteomes" id="UP000002494">
    <property type="component" value="Unplaced"/>
</dbReference>
<dbReference type="GO" id="GO:0005615">
    <property type="term" value="C:extracellular space"/>
    <property type="evidence" value="ECO:0000266"/>
    <property type="project" value="RGD"/>
</dbReference>
<dbReference type="GO" id="GO:0048020">
    <property type="term" value="F:CCR chemokine receptor binding"/>
    <property type="evidence" value="ECO:0000318"/>
    <property type="project" value="GO_Central"/>
</dbReference>
<dbReference type="GO" id="GO:0031726">
    <property type="term" value="F:CCR1 chemokine receptor binding"/>
    <property type="evidence" value="ECO:0000266"/>
    <property type="project" value="RGD"/>
</dbReference>
<dbReference type="GO" id="GO:0031730">
    <property type="term" value="F:CCR5 chemokine receptor binding"/>
    <property type="evidence" value="ECO:0000266"/>
    <property type="project" value="RGD"/>
</dbReference>
<dbReference type="GO" id="GO:0008009">
    <property type="term" value="F:chemokine activity"/>
    <property type="evidence" value="ECO:0000314"/>
    <property type="project" value="RGD"/>
</dbReference>
<dbReference type="GO" id="GO:0042802">
    <property type="term" value="F:identical protein binding"/>
    <property type="evidence" value="ECO:0000266"/>
    <property type="project" value="RGD"/>
</dbReference>
<dbReference type="GO" id="GO:0061844">
    <property type="term" value="P:antimicrobial humoral immune response mediated by antimicrobial peptide"/>
    <property type="evidence" value="ECO:0000318"/>
    <property type="project" value="GO_Central"/>
</dbReference>
<dbReference type="GO" id="GO:0071466">
    <property type="term" value="P:cellular response to xenobiotic stimulus"/>
    <property type="evidence" value="ECO:0000266"/>
    <property type="project" value="RGD"/>
</dbReference>
<dbReference type="GO" id="GO:0070098">
    <property type="term" value="P:chemokine-mediated signaling pathway"/>
    <property type="evidence" value="ECO:0000318"/>
    <property type="project" value="GO_Central"/>
</dbReference>
<dbReference type="GO" id="GO:0048245">
    <property type="term" value="P:eosinophil chemotaxis"/>
    <property type="evidence" value="ECO:0000318"/>
    <property type="project" value="GO_Central"/>
</dbReference>
<dbReference type="GO" id="GO:0006954">
    <property type="term" value="P:inflammatory response"/>
    <property type="evidence" value="ECO:0000318"/>
    <property type="project" value="GO_Central"/>
</dbReference>
<dbReference type="GO" id="GO:0030595">
    <property type="term" value="P:leukocyte chemotaxis"/>
    <property type="evidence" value="ECO:0000314"/>
    <property type="project" value="RGD"/>
</dbReference>
<dbReference type="GO" id="GO:0051928">
    <property type="term" value="P:positive regulation of calcium ion transport"/>
    <property type="evidence" value="ECO:0000266"/>
    <property type="project" value="RGD"/>
</dbReference>
<dbReference type="GO" id="GO:0050850">
    <property type="term" value="P:positive regulation of calcium-mediated signaling"/>
    <property type="evidence" value="ECO:0000266"/>
    <property type="project" value="RGD"/>
</dbReference>
<dbReference type="GO" id="GO:0030335">
    <property type="term" value="P:positive regulation of cell migration"/>
    <property type="evidence" value="ECO:0000318"/>
    <property type="project" value="GO_Central"/>
</dbReference>
<dbReference type="GO" id="GO:2000503">
    <property type="term" value="P:positive regulation of natural killer cell chemotaxis"/>
    <property type="evidence" value="ECO:0000266"/>
    <property type="project" value="RGD"/>
</dbReference>
<dbReference type="GO" id="GO:0032760">
    <property type="term" value="P:positive regulation of tumor necrosis factor production"/>
    <property type="evidence" value="ECO:0000315"/>
    <property type="project" value="RGD"/>
</dbReference>
<dbReference type="GO" id="GO:0043117">
    <property type="term" value="P:positive regulation of vascular permeability"/>
    <property type="evidence" value="ECO:0000314"/>
    <property type="project" value="RGD"/>
</dbReference>
<dbReference type="GO" id="GO:0009636">
    <property type="term" value="P:response to toxic substance"/>
    <property type="evidence" value="ECO:0000266"/>
    <property type="project" value="RGD"/>
</dbReference>
<dbReference type="CDD" id="cd00272">
    <property type="entry name" value="Chemokine_CC"/>
    <property type="match status" value="1"/>
</dbReference>
<dbReference type="FunFam" id="2.40.50.40:FF:000002">
    <property type="entry name" value="C-C motif chemokine"/>
    <property type="match status" value="1"/>
</dbReference>
<dbReference type="Gene3D" id="2.40.50.40">
    <property type="match status" value="1"/>
</dbReference>
<dbReference type="InterPro" id="IPR039809">
    <property type="entry name" value="Chemokine_b/g/d"/>
</dbReference>
<dbReference type="InterPro" id="IPR000827">
    <property type="entry name" value="Chemokine_CC_CS"/>
</dbReference>
<dbReference type="InterPro" id="IPR001811">
    <property type="entry name" value="Chemokine_IL8-like_dom"/>
</dbReference>
<dbReference type="InterPro" id="IPR036048">
    <property type="entry name" value="Interleukin_8-like_sf"/>
</dbReference>
<dbReference type="PANTHER" id="PTHR12015:SF103">
    <property type="entry name" value="C-C MOTIF CHEMOKINE 4-RELATED"/>
    <property type="match status" value="1"/>
</dbReference>
<dbReference type="PANTHER" id="PTHR12015">
    <property type="entry name" value="SMALL INDUCIBLE CYTOKINE A"/>
    <property type="match status" value="1"/>
</dbReference>
<dbReference type="Pfam" id="PF00048">
    <property type="entry name" value="IL8"/>
    <property type="match status" value="1"/>
</dbReference>
<dbReference type="SMART" id="SM00199">
    <property type="entry name" value="SCY"/>
    <property type="match status" value="1"/>
</dbReference>
<dbReference type="SUPFAM" id="SSF54117">
    <property type="entry name" value="Interleukin 8-like chemokines"/>
    <property type="match status" value="1"/>
</dbReference>
<dbReference type="PROSITE" id="PS00472">
    <property type="entry name" value="SMALL_CYTOKINES_CC"/>
    <property type="match status" value="1"/>
</dbReference>
<comment type="function">
    <text>Monokine with inflammatory and chemokinetic properties.</text>
</comment>
<comment type="subunit">
    <text evidence="1">Homodimer.</text>
</comment>
<comment type="subcellular location">
    <subcellularLocation>
        <location>Secreted</location>
    </subcellularLocation>
</comment>
<comment type="similarity">
    <text evidence="2">Belongs to the intercrine beta (chemokine CC) family.</text>
</comment>
<gene>
    <name type="primary">Ccl4</name>
    <name type="synonym">Mip1b</name>
    <name type="synonym">Scya4</name>
</gene>
<name>CCL4_RAT</name>
<evidence type="ECO:0000250" key="1"/>
<evidence type="ECO:0000305" key="2"/>
<organism>
    <name type="scientific">Rattus norvegicus</name>
    <name type="common">Rat</name>
    <dbReference type="NCBI Taxonomy" id="10116"/>
    <lineage>
        <taxon>Eukaryota</taxon>
        <taxon>Metazoa</taxon>
        <taxon>Chordata</taxon>
        <taxon>Craniata</taxon>
        <taxon>Vertebrata</taxon>
        <taxon>Euteleostomi</taxon>
        <taxon>Mammalia</taxon>
        <taxon>Eutheria</taxon>
        <taxon>Euarchontoglires</taxon>
        <taxon>Glires</taxon>
        <taxon>Rodentia</taxon>
        <taxon>Myomorpha</taxon>
        <taxon>Muroidea</taxon>
        <taxon>Muridae</taxon>
        <taxon>Murinae</taxon>
        <taxon>Rattus</taxon>
    </lineage>
</organism>
<protein>
    <recommendedName>
        <fullName>C-C motif chemokine 4</fullName>
    </recommendedName>
    <alternativeName>
        <fullName>Macrophage inflammatory protein 1-beta</fullName>
        <shortName>MIP-1-beta</shortName>
    </alternativeName>
    <alternativeName>
        <fullName>Small-inducible cytokine A4</fullName>
    </alternativeName>
</protein>
<reference key="1">
    <citation type="submission" date="1994-02" db="EMBL/GenBank/DDBJ databases">
        <authorList>
            <person name="Jones M.L."/>
            <person name="Shanley T.P."/>
            <person name="Schmal H."/>
            <person name="Friedl H.P."/>
            <person name="Ward P.A."/>
        </authorList>
    </citation>
    <scope>NUCLEOTIDE SEQUENCE [MRNA]</scope>
    <source>
        <strain>Long Evans</strain>
        <tissue>Lung</tissue>
    </source>
</reference>
<reference key="2">
    <citation type="journal article" date="2007" name="Genomics">
        <title>Fine-mapping and comprehensive transcript analysis reveals nonsynonymous variants within a novel 1.17 Mb blood pressure QTL region on rat chromosome 10.</title>
        <authorList>
            <person name="Saad Y."/>
            <person name="Garrett M.R."/>
            <person name="Manickavasagam E."/>
            <person name="Yerga-Woolwine S."/>
            <person name="Farms P."/>
            <person name="Radecki T."/>
            <person name="Joe B."/>
        </authorList>
    </citation>
    <scope>NUCLEOTIDE SEQUENCE [MRNA]</scope>
    <source>
        <strain>Dahl salt-sensitive</strain>
        <strain>Lewis</strain>
    </source>
</reference>
<keyword id="KW-0145">Chemotaxis</keyword>
<keyword id="KW-0202">Cytokine</keyword>
<keyword id="KW-1015">Disulfide bond</keyword>
<keyword id="KW-0395">Inflammatory response</keyword>
<keyword id="KW-1185">Reference proteome</keyword>
<keyword id="KW-0964">Secreted</keyword>
<keyword id="KW-0732">Signal</keyword>
<sequence length="92" mass="10234">MKLCVSAFSLLLLVAAFCDSVLSAPIGSDPPTSCCFSYTSRKIHRNFVMDYYETSSLCSQPAVVFLTKKGRQICADPSEPWVNEYVNDLELN</sequence>
<feature type="signal peptide" evidence="1">
    <location>
        <begin position="1"/>
        <end position="23"/>
    </location>
</feature>
<feature type="chain" id="PRO_0000005167" description="C-C motif chemokine 4">
    <location>
        <begin position="24"/>
        <end position="92"/>
    </location>
</feature>
<feature type="disulfide bond" evidence="1">
    <location>
        <begin position="34"/>
        <end position="58"/>
    </location>
</feature>
<feature type="disulfide bond" evidence="1">
    <location>
        <begin position="35"/>
        <end position="74"/>
    </location>
</feature>